<keyword id="KW-0963">Cytoplasm</keyword>
<keyword id="KW-0255">Endonuclease</keyword>
<keyword id="KW-0378">Hydrolase</keyword>
<keyword id="KW-0479">Metal-binding</keyword>
<keyword id="KW-0540">Nuclease</keyword>
<keyword id="KW-0690">Ribosome biogenesis</keyword>
<keyword id="KW-0698">rRNA processing</keyword>
<keyword id="KW-0862">Zinc</keyword>
<reference key="1">
    <citation type="journal article" date="2010" name="Genome Biol.">
        <title>Structure and dynamics of the pan-genome of Streptococcus pneumoniae and closely related species.</title>
        <authorList>
            <person name="Donati C."/>
            <person name="Hiller N.L."/>
            <person name="Tettelin H."/>
            <person name="Muzzi A."/>
            <person name="Croucher N.J."/>
            <person name="Angiuoli S.V."/>
            <person name="Oggioni M."/>
            <person name="Dunning Hotopp J.C."/>
            <person name="Hu F.Z."/>
            <person name="Riley D.R."/>
            <person name="Covacci A."/>
            <person name="Mitchell T.J."/>
            <person name="Bentley S.D."/>
            <person name="Kilian M."/>
            <person name="Ehrlich G.D."/>
            <person name="Rappuoli R."/>
            <person name="Moxon E.R."/>
            <person name="Masignani V."/>
        </authorList>
    </citation>
    <scope>NUCLEOTIDE SEQUENCE [LARGE SCALE GENOMIC DNA]</scope>
    <source>
        <strain>Hungary19A-6</strain>
    </source>
</reference>
<evidence type="ECO:0000255" key="1">
    <source>
        <dbReference type="HAMAP-Rule" id="MF_00009"/>
    </source>
</evidence>
<organism>
    <name type="scientific">Streptococcus pneumoniae (strain Hungary19A-6)</name>
    <dbReference type="NCBI Taxonomy" id="487214"/>
    <lineage>
        <taxon>Bacteria</taxon>
        <taxon>Bacillati</taxon>
        <taxon>Bacillota</taxon>
        <taxon>Bacilli</taxon>
        <taxon>Lactobacillales</taxon>
        <taxon>Streptococcaceae</taxon>
        <taxon>Streptococcus</taxon>
    </lineage>
</organism>
<gene>
    <name evidence="1" type="primary">ybeY</name>
    <name type="ordered locus">SPH_1068</name>
</gene>
<accession>B1IBC7</accession>
<name>YBEY_STRPI</name>
<feature type="chain" id="PRO_1000089216" description="Endoribonuclease YbeY">
    <location>
        <begin position="1"/>
        <end position="165"/>
    </location>
</feature>
<feature type="binding site" evidence="1">
    <location>
        <position position="130"/>
    </location>
    <ligand>
        <name>Zn(2+)</name>
        <dbReference type="ChEBI" id="CHEBI:29105"/>
        <note>catalytic</note>
    </ligand>
</feature>
<feature type="binding site" evidence="1">
    <location>
        <position position="134"/>
    </location>
    <ligand>
        <name>Zn(2+)</name>
        <dbReference type="ChEBI" id="CHEBI:29105"/>
        <note>catalytic</note>
    </ligand>
</feature>
<feature type="binding site" evidence="1">
    <location>
        <position position="140"/>
    </location>
    <ligand>
        <name>Zn(2+)</name>
        <dbReference type="ChEBI" id="CHEBI:29105"/>
        <note>catalytic</note>
    </ligand>
</feature>
<protein>
    <recommendedName>
        <fullName evidence="1">Endoribonuclease YbeY</fullName>
        <ecNumber evidence="1">3.1.-.-</ecNumber>
    </recommendedName>
</protein>
<dbReference type="EC" id="3.1.-.-" evidence="1"/>
<dbReference type="EMBL" id="CP000936">
    <property type="protein sequence ID" value="ACA36294.1"/>
    <property type="molecule type" value="Genomic_DNA"/>
</dbReference>
<dbReference type="RefSeq" id="WP_000275156.1">
    <property type="nucleotide sequence ID" value="NC_010380.1"/>
</dbReference>
<dbReference type="SMR" id="B1IBC7"/>
<dbReference type="GeneID" id="93739770"/>
<dbReference type="KEGG" id="spv:SPH_1068"/>
<dbReference type="HOGENOM" id="CLU_106710_3_0_9"/>
<dbReference type="Proteomes" id="UP000002163">
    <property type="component" value="Chromosome"/>
</dbReference>
<dbReference type="GO" id="GO:0005737">
    <property type="term" value="C:cytoplasm"/>
    <property type="evidence" value="ECO:0007669"/>
    <property type="project" value="UniProtKB-SubCell"/>
</dbReference>
<dbReference type="GO" id="GO:0004222">
    <property type="term" value="F:metalloendopeptidase activity"/>
    <property type="evidence" value="ECO:0007669"/>
    <property type="project" value="InterPro"/>
</dbReference>
<dbReference type="GO" id="GO:0004521">
    <property type="term" value="F:RNA endonuclease activity"/>
    <property type="evidence" value="ECO:0007669"/>
    <property type="project" value="UniProtKB-UniRule"/>
</dbReference>
<dbReference type="GO" id="GO:0008270">
    <property type="term" value="F:zinc ion binding"/>
    <property type="evidence" value="ECO:0007669"/>
    <property type="project" value="UniProtKB-UniRule"/>
</dbReference>
<dbReference type="GO" id="GO:0006364">
    <property type="term" value="P:rRNA processing"/>
    <property type="evidence" value="ECO:0007669"/>
    <property type="project" value="UniProtKB-UniRule"/>
</dbReference>
<dbReference type="Gene3D" id="3.40.390.30">
    <property type="entry name" value="Metalloproteases ('zincins'), catalytic domain"/>
    <property type="match status" value="1"/>
</dbReference>
<dbReference type="HAMAP" id="MF_00009">
    <property type="entry name" value="Endoribonucl_YbeY"/>
    <property type="match status" value="1"/>
</dbReference>
<dbReference type="InterPro" id="IPR023091">
    <property type="entry name" value="MetalPrtase_cat_dom_sf_prd"/>
</dbReference>
<dbReference type="InterPro" id="IPR002036">
    <property type="entry name" value="YbeY"/>
</dbReference>
<dbReference type="InterPro" id="IPR020549">
    <property type="entry name" value="YbeY_CS"/>
</dbReference>
<dbReference type="NCBIfam" id="TIGR00043">
    <property type="entry name" value="rRNA maturation RNase YbeY"/>
    <property type="match status" value="1"/>
</dbReference>
<dbReference type="PANTHER" id="PTHR46986">
    <property type="entry name" value="ENDORIBONUCLEASE YBEY, CHLOROPLASTIC"/>
    <property type="match status" value="1"/>
</dbReference>
<dbReference type="PANTHER" id="PTHR46986:SF1">
    <property type="entry name" value="ENDORIBONUCLEASE YBEY, CHLOROPLASTIC"/>
    <property type="match status" value="1"/>
</dbReference>
<dbReference type="Pfam" id="PF02130">
    <property type="entry name" value="YbeY"/>
    <property type="match status" value="1"/>
</dbReference>
<dbReference type="SUPFAM" id="SSF55486">
    <property type="entry name" value="Metalloproteases ('zincins'), catalytic domain"/>
    <property type="match status" value="1"/>
</dbReference>
<dbReference type="PROSITE" id="PS01306">
    <property type="entry name" value="UPF0054"/>
    <property type="match status" value="1"/>
</dbReference>
<proteinExistence type="inferred from homology"/>
<comment type="function">
    <text evidence="1">Single strand-specific metallo-endoribonuclease involved in late-stage 70S ribosome quality control and in maturation of the 3' terminus of the 16S rRNA.</text>
</comment>
<comment type="cofactor">
    <cofactor evidence="1">
        <name>Zn(2+)</name>
        <dbReference type="ChEBI" id="CHEBI:29105"/>
    </cofactor>
    <text evidence="1">Binds 1 zinc ion.</text>
</comment>
<comment type="subcellular location">
    <subcellularLocation>
        <location evidence="1">Cytoplasm</location>
    </subcellularLocation>
</comment>
<comment type="similarity">
    <text evidence="1">Belongs to the endoribonuclease YbeY family.</text>
</comment>
<sequence>MYIEMVDETGQVSKEMLQQTQEILEFAAQKLGKEDKEMAVTFVTNERSHELNLEYRDTDRPTDVISLEYKPELEIAFDEEDLLENPELAEMMSEFDAYIGELFISIDKAHEQAEEYGHSFEREMGFLAVHGFLHINGYDHYTPEEEAEMFGLQEEILTAYGLTRQ</sequence>